<name>ACYP_MYCTU</name>
<dbReference type="EC" id="3.6.1.7"/>
<dbReference type="EMBL" id="AL123456">
    <property type="protein sequence ID" value="CCP45725.1"/>
    <property type="molecule type" value="Genomic_DNA"/>
</dbReference>
<dbReference type="RefSeq" id="WP_003414811.1">
    <property type="nucleotide sequence ID" value="NZ_NVQJ01000006.1"/>
</dbReference>
<dbReference type="RefSeq" id="YP_177679.1">
    <property type="nucleotide sequence ID" value="NC_000962.3"/>
</dbReference>
<dbReference type="SMR" id="P9WQC9"/>
<dbReference type="FunCoup" id="P9WQC9">
    <property type="interactions" value="49"/>
</dbReference>
<dbReference type="STRING" id="83332.Rv2922A"/>
<dbReference type="PaxDb" id="83332-Rv2922A"/>
<dbReference type="GeneID" id="3205043"/>
<dbReference type="KEGG" id="mtu:Rv2922A"/>
<dbReference type="KEGG" id="mtv:RVBD_2922A"/>
<dbReference type="TubercuList" id="Rv2922A"/>
<dbReference type="eggNOG" id="COG1254">
    <property type="taxonomic scope" value="Bacteria"/>
</dbReference>
<dbReference type="InParanoid" id="P9WQC9"/>
<dbReference type="OrthoDB" id="3182027at2"/>
<dbReference type="PhylomeDB" id="P9WQC9"/>
<dbReference type="Proteomes" id="UP000001584">
    <property type="component" value="Chromosome"/>
</dbReference>
<dbReference type="GO" id="GO:0003998">
    <property type="term" value="F:acylphosphatase activity"/>
    <property type="evidence" value="ECO:0007669"/>
    <property type="project" value="UniProtKB-EC"/>
</dbReference>
<dbReference type="Gene3D" id="3.30.70.100">
    <property type="match status" value="1"/>
</dbReference>
<dbReference type="InterPro" id="IPR020456">
    <property type="entry name" value="Acylphosphatase"/>
</dbReference>
<dbReference type="InterPro" id="IPR001792">
    <property type="entry name" value="Acylphosphatase-like_dom"/>
</dbReference>
<dbReference type="InterPro" id="IPR036046">
    <property type="entry name" value="Acylphosphatase-like_dom_sf"/>
</dbReference>
<dbReference type="InterPro" id="IPR017968">
    <property type="entry name" value="Acylphosphatase_CS"/>
</dbReference>
<dbReference type="NCBIfam" id="NF010997">
    <property type="entry name" value="PRK14422.1"/>
    <property type="match status" value="1"/>
</dbReference>
<dbReference type="PANTHER" id="PTHR47268">
    <property type="entry name" value="ACYLPHOSPHATASE"/>
    <property type="match status" value="1"/>
</dbReference>
<dbReference type="PANTHER" id="PTHR47268:SF4">
    <property type="entry name" value="ACYLPHOSPHATASE"/>
    <property type="match status" value="1"/>
</dbReference>
<dbReference type="Pfam" id="PF00708">
    <property type="entry name" value="Acylphosphatase"/>
    <property type="match status" value="1"/>
</dbReference>
<dbReference type="SUPFAM" id="SSF54975">
    <property type="entry name" value="Acylphosphatase/BLUF domain-like"/>
    <property type="match status" value="1"/>
</dbReference>
<dbReference type="PROSITE" id="PS00150">
    <property type="entry name" value="ACYLPHOSPHATASE_1"/>
    <property type="match status" value="1"/>
</dbReference>
<dbReference type="PROSITE" id="PS00151">
    <property type="entry name" value="ACYLPHOSPHATASE_2"/>
    <property type="match status" value="1"/>
</dbReference>
<dbReference type="PROSITE" id="PS51160">
    <property type="entry name" value="ACYLPHOSPHATASE_3"/>
    <property type="match status" value="1"/>
</dbReference>
<keyword id="KW-0378">Hydrolase</keyword>
<keyword id="KW-1185">Reference proteome</keyword>
<evidence type="ECO:0000255" key="1">
    <source>
        <dbReference type="PROSITE-ProRule" id="PRU00520"/>
    </source>
</evidence>
<evidence type="ECO:0000305" key="2"/>
<protein>
    <recommendedName>
        <fullName>Acylphosphatase</fullName>
        <ecNumber>3.6.1.7</ecNumber>
    </recommendedName>
    <alternativeName>
        <fullName>Acylphosphate phosphohydrolase</fullName>
    </alternativeName>
</protein>
<feature type="chain" id="PRO_0000158556" description="Acylphosphatase">
    <location>
        <begin position="1"/>
        <end position="93"/>
    </location>
</feature>
<feature type="domain" description="Acylphosphatase-like" evidence="1">
    <location>
        <begin position="7"/>
        <end position="93"/>
    </location>
</feature>
<feature type="active site" evidence="1">
    <location>
        <position position="22"/>
    </location>
</feature>
<feature type="active site" evidence="1">
    <location>
        <position position="40"/>
    </location>
</feature>
<organism>
    <name type="scientific">Mycobacterium tuberculosis (strain ATCC 25618 / H37Rv)</name>
    <dbReference type="NCBI Taxonomy" id="83332"/>
    <lineage>
        <taxon>Bacteria</taxon>
        <taxon>Bacillati</taxon>
        <taxon>Actinomycetota</taxon>
        <taxon>Actinomycetes</taxon>
        <taxon>Mycobacteriales</taxon>
        <taxon>Mycobacteriaceae</taxon>
        <taxon>Mycobacterium</taxon>
        <taxon>Mycobacterium tuberculosis complex</taxon>
    </lineage>
</organism>
<proteinExistence type="evidence at protein level"/>
<gene>
    <name type="primary">acyP</name>
    <name type="ordered locus">Rv2922.1c</name>
    <name type="ORF">MTCY338.11Bc</name>
    <name type="ORF">Rv2922A</name>
</gene>
<reference key="1">
    <citation type="journal article" date="1998" name="Nature">
        <title>Deciphering the biology of Mycobacterium tuberculosis from the complete genome sequence.</title>
        <authorList>
            <person name="Cole S.T."/>
            <person name="Brosch R."/>
            <person name="Parkhill J."/>
            <person name="Garnier T."/>
            <person name="Churcher C.M."/>
            <person name="Harris D.E."/>
            <person name="Gordon S.V."/>
            <person name="Eiglmeier K."/>
            <person name="Gas S."/>
            <person name="Barry C.E. III"/>
            <person name="Tekaia F."/>
            <person name="Badcock K."/>
            <person name="Basham D."/>
            <person name="Brown D."/>
            <person name="Chillingworth T."/>
            <person name="Connor R."/>
            <person name="Davies R.M."/>
            <person name="Devlin K."/>
            <person name="Feltwell T."/>
            <person name="Gentles S."/>
            <person name="Hamlin N."/>
            <person name="Holroyd S."/>
            <person name="Hornsby T."/>
            <person name="Jagels K."/>
            <person name="Krogh A."/>
            <person name="McLean J."/>
            <person name="Moule S."/>
            <person name="Murphy L.D."/>
            <person name="Oliver S."/>
            <person name="Osborne J."/>
            <person name="Quail M.A."/>
            <person name="Rajandream M.A."/>
            <person name="Rogers J."/>
            <person name="Rutter S."/>
            <person name="Seeger K."/>
            <person name="Skelton S."/>
            <person name="Squares S."/>
            <person name="Squares R."/>
            <person name="Sulston J.E."/>
            <person name="Taylor K."/>
            <person name="Whitehead S."/>
            <person name="Barrell B.G."/>
        </authorList>
    </citation>
    <scope>NUCLEOTIDE SEQUENCE [LARGE SCALE GENOMIC DNA]</scope>
    <source>
        <strain>ATCC 25618 / H37Rv</strain>
    </source>
</reference>
<reference key="2">
    <citation type="journal article" date="2002" name="Microbiology">
        <title>Re-annotation of the genome sequence of Mycobacterium tuberculosis H37Rv.</title>
        <authorList>
            <person name="Camus J.-C."/>
            <person name="Pryor M.J."/>
            <person name="Medigue C."/>
            <person name="Cole S.T."/>
        </authorList>
    </citation>
    <scope>IDENTIFICATION</scope>
    <source>
        <strain>ATCC 25618 / H37Rv</strain>
    </source>
</reference>
<reference key="3">
    <citation type="journal article" date="2011" name="Mol. Cell. Proteomics">
        <title>Proteogenomic analysis of Mycobacterium tuberculosis by high resolution mass spectrometry.</title>
        <authorList>
            <person name="Kelkar D.S."/>
            <person name="Kumar D."/>
            <person name="Kumar P."/>
            <person name="Balakrishnan L."/>
            <person name="Muthusamy B."/>
            <person name="Yadav A.K."/>
            <person name="Shrivastava P."/>
            <person name="Marimuthu A."/>
            <person name="Anand S."/>
            <person name="Sundaram H."/>
            <person name="Kingsbury R."/>
            <person name="Harsha H.C."/>
            <person name="Nair B."/>
            <person name="Prasad T.S."/>
            <person name="Chauhan D.S."/>
            <person name="Katoch K."/>
            <person name="Katoch V.M."/>
            <person name="Kumar P."/>
            <person name="Chaerkady R."/>
            <person name="Ramachandran S."/>
            <person name="Dash D."/>
            <person name="Pandey A."/>
        </authorList>
    </citation>
    <scope>IDENTIFICATION BY MASS SPECTROMETRY [LARGE SCALE ANALYSIS]</scope>
    <source>
        <strain>ATCC 25618 / H37Rv</strain>
    </source>
</reference>
<sequence>MSAPDVRLTAWVHGWVQGVGFRWWTRCRALELGLTGYAANHADGRVLVVAQGPRAACQKLLQLLQGDTTPGRVAKVVADWSQSTEQITGFSER</sequence>
<comment type="catalytic activity">
    <reaction>
        <text>an acyl phosphate + H2O = a carboxylate + phosphate + H(+)</text>
        <dbReference type="Rhea" id="RHEA:14965"/>
        <dbReference type="ChEBI" id="CHEBI:15377"/>
        <dbReference type="ChEBI" id="CHEBI:15378"/>
        <dbReference type="ChEBI" id="CHEBI:29067"/>
        <dbReference type="ChEBI" id="CHEBI:43474"/>
        <dbReference type="ChEBI" id="CHEBI:59918"/>
        <dbReference type="EC" id="3.6.1.7"/>
    </reaction>
</comment>
<comment type="similarity">
    <text evidence="2">Belongs to the acylphosphatase family.</text>
</comment>
<accession>P9WQC9</accession>
<accession>L0TB15</accession>
<accession>P56543</accession>
<accession>P69419</accession>